<comment type="function">
    <text evidence="1">Essential for the assembly of the photosystem I (PSI) complex. May act as a chaperone-like factor to guide the assembly of the PSI subunits.</text>
</comment>
<comment type="subcellular location">
    <subcellularLocation>
        <location evidence="2">Plastid membrane</location>
        <topology evidence="1">Peripheral membrane protein</topology>
    </subcellularLocation>
</comment>
<comment type="similarity">
    <text evidence="1">Belongs to the Ycf3 family.</text>
</comment>
<comment type="caution">
    <text evidence="2">Young tissue from this organism is photosynthetic and contains some thylakoids, although the photosynthetic activity does not exceed the light compensation point.</text>
</comment>
<reference key="1">
    <citation type="journal article" date="2007" name="BMC Plant Biol.">
        <title>Complete DNA sequences of the plastid genomes of two parasitic flowering plant species, Cuscuta reflexa and Cuscuta gronovii.</title>
        <authorList>
            <person name="Funk H.T."/>
            <person name="Berg S."/>
            <person name="Krupinska K."/>
            <person name="Maier U.-G."/>
            <person name="Krause K."/>
        </authorList>
    </citation>
    <scope>NUCLEOTIDE SEQUENCE [LARGE SCALE GENOMIC DNA]</scope>
</reference>
<sequence length="168" mass="19511">MPRSRINGNFLDKTFSIVANILLRIIPTTSGEKEAFTYYRDRMSAQSEGNYAEALQNYYEAMRLEIDPYDRSYILYNIGLIHTSNGEHMKALEYYFRALERNPFLPQAFNNMAVICHYRGEQAIQQGDSEIAGAWFDQAAEYWKQALALTPGNYIEAHNWLKITGRFD</sequence>
<name>YCF3_CUSRE</name>
<proteinExistence type="inferred from homology"/>
<dbReference type="EMBL" id="AM711640">
    <property type="protein sequence ID" value="CAM98395.1"/>
    <property type="molecule type" value="Genomic_DNA"/>
</dbReference>
<dbReference type="RefSeq" id="YP_001430109.1">
    <property type="nucleotide sequence ID" value="NC_009766.1"/>
</dbReference>
<dbReference type="SMR" id="A7M967"/>
<dbReference type="GeneID" id="5536702"/>
<dbReference type="GO" id="GO:0042170">
    <property type="term" value="C:plastid membrane"/>
    <property type="evidence" value="ECO:0007669"/>
    <property type="project" value="UniProtKB-SubCell"/>
</dbReference>
<dbReference type="GO" id="GO:0042651">
    <property type="term" value="C:thylakoid membrane"/>
    <property type="evidence" value="ECO:0007669"/>
    <property type="project" value="UniProtKB-UniRule"/>
</dbReference>
<dbReference type="GO" id="GO:0015979">
    <property type="term" value="P:photosynthesis"/>
    <property type="evidence" value="ECO:0007669"/>
    <property type="project" value="UniProtKB-UniRule"/>
</dbReference>
<dbReference type="FunFam" id="1.25.40.10:FF:000004">
    <property type="entry name" value="Photosystem I assembly protein Ycf3"/>
    <property type="match status" value="1"/>
</dbReference>
<dbReference type="Gene3D" id="1.25.40.10">
    <property type="entry name" value="Tetratricopeptide repeat domain"/>
    <property type="match status" value="1"/>
</dbReference>
<dbReference type="HAMAP" id="MF_00439">
    <property type="entry name" value="Ycf3"/>
    <property type="match status" value="1"/>
</dbReference>
<dbReference type="InterPro" id="IPR022818">
    <property type="entry name" value="PSI_Ycf3_assembly"/>
</dbReference>
<dbReference type="InterPro" id="IPR011990">
    <property type="entry name" value="TPR-like_helical_dom_sf"/>
</dbReference>
<dbReference type="InterPro" id="IPR019734">
    <property type="entry name" value="TPR_rpt"/>
</dbReference>
<dbReference type="InterPro" id="IPR051685">
    <property type="entry name" value="Ycf3/AcsC/BcsC/TPR_MFPF"/>
</dbReference>
<dbReference type="NCBIfam" id="NF002725">
    <property type="entry name" value="PRK02603.1"/>
    <property type="match status" value="1"/>
</dbReference>
<dbReference type="PANTHER" id="PTHR44943">
    <property type="entry name" value="CELLULOSE SYNTHASE OPERON PROTEIN C"/>
    <property type="match status" value="1"/>
</dbReference>
<dbReference type="PANTHER" id="PTHR44943:SF8">
    <property type="entry name" value="TPR REPEAT-CONTAINING PROTEIN MJ0263"/>
    <property type="match status" value="1"/>
</dbReference>
<dbReference type="Pfam" id="PF00515">
    <property type="entry name" value="TPR_1"/>
    <property type="match status" value="1"/>
</dbReference>
<dbReference type="SMART" id="SM00028">
    <property type="entry name" value="TPR"/>
    <property type="match status" value="3"/>
</dbReference>
<dbReference type="SUPFAM" id="SSF48452">
    <property type="entry name" value="TPR-like"/>
    <property type="match status" value="1"/>
</dbReference>
<dbReference type="PROSITE" id="PS50005">
    <property type="entry name" value="TPR"/>
    <property type="match status" value="3"/>
</dbReference>
<dbReference type="PROSITE" id="PS50293">
    <property type="entry name" value="TPR_REGION"/>
    <property type="match status" value="1"/>
</dbReference>
<accession>A7M967</accession>
<evidence type="ECO:0000255" key="1">
    <source>
        <dbReference type="HAMAP-Rule" id="MF_00439"/>
    </source>
</evidence>
<evidence type="ECO:0000305" key="2"/>
<protein>
    <recommendedName>
        <fullName evidence="1">Photosystem I assembly protein Ycf3</fullName>
    </recommendedName>
</protein>
<organism>
    <name type="scientific">Cuscuta reflexa</name>
    <name type="common">Southern Asian dodder</name>
    <dbReference type="NCBI Taxonomy" id="4129"/>
    <lineage>
        <taxon>Eukaryota</taxon>
        <taxon>Viridiplantae</taxon>
        <taxon>Streptophyta</taxon>
        <taxon>Embryophyta</taxon>
        <taxon>Tracheophyta</taxon>
        <taxon>Spermatophyta</taxon>
        <taxon>Magnoliopsida</taxon>
        <taxon>eudicotyledons</taxon>
        <taxon>Gunneridae</taxon>
        <taxon>Pentapetalae</taxon>
        <taxon>asterids</taxon>
        <taxon>lamiids</taxon>
        <taxon>Solanales</taxon>
        <taxon>Convolvulaceae</taxon>
        <taxon>Cuscuteae</taxon>
        <taxon>Cuscuta</taxon>
        <taxon>Cuscuta subgen. Monogynella</taxon>
    </lineage>
</organism>
<gene>
    <name evidence="1" type="primary">ycf3</name>
</gene>
<geneLocation type="plastid"/>
<keyword id="KW-0472">Membrane</keyword>
<keyword id="KW-0602">Photosynthesis</keyword>
<keyword id="KW-0934">Plastid</keyword>
<keyword id="KW-0677">Repeat</keyword>
<keyword id="KW-0802">TPR repeat</keyword>
<feature type="chain" id="PRO_0000325059" description="Photosystem I assembly protein Ycf3">
    <location>
        <begin position="1"/>
        <end position="168"/>
    </location>
</feature>
<feature type="repeat" description="TPR 1">
    <location>
        <begin position="35"/>
        <end position="68"/>
    </location>
</feature>
<feature type="repeat" description="TPR 2">
    <location>
        <begin position="72"/>
        <end position="105"/>
    </location>
</feature>
<feature type="repeat" description="TPR 3">
    <location>
        <begin position="120"/>
        <end position="153"/>
    </location>
</feature>